<comment type="function">
    <text evidence="1">Transfers a phosphoglycerol residue from phosphatidylglycerol to the membrane-bound nascent glucan backbones.</text>
</comment>
<comment type="catalytic activity">
    <reaction evidence="1">
        <text>a phosphatidylglycerol + a membrane-derived-oligosaccharide D-glucose = a 1,2-diacyl-sn-glycerol + a membrane-derived-oligosaccharide 6-(glycerophospho)-D-glucose.</text>
        <dbReference type="EC" id="2.7.8.20"/>
    </reaction>
</comment>
<comment type="pathway">
    <text evidence="1">Glycan metabolism; osmoregulated periplasmic glucan (OPG) biosynthesis.</text>
</comment>
<comment type="subcellular location">
    <subcellularLocation>
        <location evidence="1">Cell inner membrane</location>
        <topology evidence="1">Multi-pass membrane protein</topology>
    </subcellularLocation>
</comment>
<comment type="similarity">
    <text evidence="1">Belongs to the OpgB family.</text>
</comment>
<protein>
    <recommendedName>
        <fullName evidence="1">Phosphoglycerol transferase I</fullName>
        <ecNumber evidence="1">2.7.8.20</ecNumber>
    </recommendedName>
    <alternativeName>
        <fullName evidence="1">Phosphatidylglycerol--membrane-oligosaccharide glycerophosphotransferase</fullName>
    </alternativeName>
</protein>
<keyword id="KW-0997">Cell inner membrane</keyword>
<keyword id="KW-1003">Cell membrane</keyword>
<keyword id="KW-0472">Membrane</keyword>
<keyword id="KW-0808">Transferase</keyword>
<keyword id="KW-0812">Transmembrane</keyword>
<keyword id="KW-1133">Transmembrane helix</keyword>
<proteinExistence type="inferred from homology"/>
<gene>
    <name evidence="1" type="primary">mdoB</name>
    <name evidence="1" type="synonym">opgB</name>
    <name type="ordered locus">STY4894</name>
    <name type="ordered locus">t4584</name>
</gene>
<accession>Q8Z0W2</accession>
<evidence type="ECO:0000255" key="1">
    <source>
        <dbReference type="HAMAP-Rule" id="MF_01070"/>
    </source>
</evidence>
<organism>
    <name type="scientific">Salmonella typhi</name>
    <dbReference type="NCBI Taxonomy" id="90370"/>
    <lineage>
        <taxon>Bacteria</taxon>
        <taxon>Pseudomonadati</taxon>
        <taxon>Pseudomonadota</taxon>
        <taxon>Gammaproteobacteria</taxon>
        <taxon>Enterobacterales</taxon>
        <taxon>Enterobacteriaceae</taxon>
        <taxon>Salmonella</taxon>
    </lineage>
</organism>
<reference key="1">
    <citation type="journal article" date="2001" name="Nature">
        <title>Complete genome sequence of a multiple drug resistant Salmonella enterica serovar Typhi CT18.</title>
        <authorList>
            <person name="Parkhill J."/>
            <person name="Dougan G."/>
            <person name="James K.D."/>
            <person name="Thomson N.R."/>
            <person name="Pickard D."/>
            <person name="Wain J."/>
            <person name="Churcher C.M."/>
            <person name="Mungall K.L."/>
            <person name="Bentley S.D."/>
            <person name="Holden M.T.G."/>
            <person name="Sebaihia M."/>
            <person name="Baker S."/>
            <person name="Basham D."/>
            <person name="Brooks K."/>
            <person name="Chillingworth T."/>
            <person name="Connerton P."/>
            <person name="Cronin A."/>
            <person name="Davis P."/>
            <person name="Davies R.M."/>
            <person name="Dowd L."/>
            <person name="White N."/>
            <person name="Farrar J."/>
            <person name="Feltwell T."/>
            <person name="Hamlin N."/>
            <person name="Haque A."/>
            <person name="Hien T.T."/>
            <person name="Holroyd S."/>
            <person name="Jagels K."/>
            <person name="Krogh A."/>
            <person name="Larsen T.S."/>
            <person name="Leather S."/>
            <person name="Moule S."/>
            <person name="O'Gaora P."/>
            <person name="Parry C."/>
            <person name="Quail M.A."/>
            <person name="Rutherford K.M."/>
            <person name="Simmonds M."/>
            <person name="Skelton J."/>
            <person name="Stevens K."/>
            <person name="Whitehead S."/>
            <person name="Barrell B.G."/>
        </authorList>
    </citation>
    <scope>NUCLEOTIDE SEQUENCE [LARGE SCALE GENOMIC DNA]</scope>
    <source>
        <strain>CT18</strain>
    </source>
</reference>
<reference key="2">
    <citation type="journal article" date="2003" name="J. Bacteriol.">
        <title>Comparative genomics of Salmonella enterica serovar Typhi strains Ty2 and CT18.</title>
        <authorList>
            <person name="Deng W."/>
            <person name="Liou S.-R."/>
            <person name="Plunkett G. III"/>
            <person name="Mayhew G.F."/>
            <person name="Rose D.J."/>
            <person name="Burland V."/>
            <person name="Kodoyianni V."/>
            <person name="Schwartz D.C."/>
            <person name="Blattner F.R."/>
        </authorList>
    </citation>
    <scope>NUCLEOTIDE SEQUENCE [LARGE SCALE GENOMIC DNA]</scope>
    <source>
        <strain>ATCC 700931 / Ty2</strain>
    </source>
</reference>
<feature type="chain" id="PRO_0000213062" description="Phosphoglycerol transferase I">
    <location>
        <begin position="1"/>
        <end position="763"/>
    </location>
</feature>
<feature type="transmembrane region" description="Helical" evidence="1">
    <location>
        <begin position="4"/>
        <end position="19"/>
    </location>
</feature>
<feature type="transmembrane region" description="Helical" evidence="1">
    <location>
        <begin position="26"/>
        <end position="48"/>
    </location>
</feature>
<feature type="transmembrane region" description="Helical" evidence="1">
    <location>
        <begin position="76"/>
        <end position="98"/>
    </location>
</feature>
<feature type="transmembrane region" description="Helical" evidence="1">
    <location>
        <begin position="110"/>
        <end position="132"/>
    </location>
</feature>
<sequence length="763" mass="85130">MSELLSVALFLASVLIYAWKAGRNTWWFAATLTVLGLFVILNITLYASDYFTGDGINDAVLYTLTNSLTGAGVGKYILPGIGIALALVAVFGALGWVLRRRRHHPHHVGYSLLALLLALGSVDASPAFRQITELVKSQMRDGDPDFAVYYKEPAKTIPHPKLNLVYIYGESLERTYFDNDAFPNLTPELGALKNEGLDFSHTMQLPGTDYTIAGMVASQCGIPLFAPFEGNASASVSSFFPQNICLGDILKNSGYQNYFVQGANLRFAGKDVFLKSHGFDHLYGAEELKTVVADPSYRNDWGFYDDTVLDEAWKKFEALSRSGQRFSLFTLTVDTHHPDGFISRTCNRKRYDYDGKPNQSFSTVSCSQENIAEFINKIKASPWFKDTVIVVSSDHLAMNNTAWKYLNKQDRNNLFFILRGDKPQQETLAVKRNTMDNGATVLDILGGDNFIGLGRSSLSGQSLSEVFLNVKEKVLAMKPDIIRLWNFPKEIKDFTVDRDKNMIAFSGSHFRLPLLLRVSDKRVEPLPESEYSAPLRFQLADFAPRDNFVWIDRCYKMAQLWAPALALSTDWCVSQGQLGGQQTVQHVDKAQWQGKTAFKDTMIDMERYKGNVDTLKIVDNDIRYKADSFIFNVAGAPEEVKQFSGISRPESWGRWSNAQLGDEVKIEYKAPLPKKFDLVITAKAFGDNANRPIPVRVGNEEQTLVLGHDVSTITLHFNNPTDANTLVIAPPAPVSTNEGNILGHSPRKLGIGMVEIKVVNVES</sequence>
<dbReference type="EC" id="2.7.8.20" evidence="1"/>
<dbReference type="EMBL" id="AL513382">
    <property type="protein sequence ID" value="CAD03379.1"/>
    <property type="molecule type" value="Genomic_DNA"/>
</dbReference>
<dbReference type="EMBL" id="AE014613">
    <property type="protein sequence ID" value="AAO72019.1"/>
    <property type="molecule type" value="Genomic_DNA"/>
</dbReference>
<dbReference type="RefSeq" id="NP_458956.1">
    <property type="nucleotide sequence ID" value="NC_003198.1"/>
</dbReference>
<dbReference type="RefSeq" id="WP_001292715.1">
    <property type="nucleotide sequence ID" value="NZ_WSUR01000014.1"/>
</dbReference>
<dbReference type="SMR" id="Q8Z0W2"/>
<dbReference type="STRING" id="220341.gene:17588710"/>
<dbReference type="KEGG" id="stt:t4584"/>
<dbReference type="KEGG" id="sty:STY4894"/>
<dbReference type="PATRIC" id="fig|220341.7.peg.5015"/>
<dbReference type="eggNOG" id="COG1368">
    <property type="taxonomic scope" value="Bacteria"/>
</dbReference>
<dbReference type="HOGENOM" id="CLU_023986_1_0_6"/>
<dbReference type="OMA" id="AMNNTAY"/>
<dbReference type="UniPathway" id="UPA00637"/>
<dbReference type="Proteomes" id="UP000000541">
    <property type="component" value="Chromosome"/>
</dbReference>
<dbReference type="Proteomes" id="UP000002670">
    <property type="component" value="Chromosome"/>
</dbReference>
<dbReference type="GO" id="GO:0005886">
    <property type="term" value="C:plasma membrane"/>
    <property type="evidence" value="ECO:0007669"/>
    <property type="project" value="UniProtKB-SubCell"/>
</dbReference>
<dbReference type="GO" id="GO:0008960">
    <property type="term" value="F:phosphatidylglycerol-membrane-oligosaccharide glycerophosphotransferase activity"/>
    <property type="evidence" value="ECO:0007669"/>
    <property type="project" value="UniProtKB-UniRule"/>
</dbReference>
<dbReference type="GO" id="GO:0009250">
    <property type="term" value="P:glucan biosynthetic process"/>
    <property type="evidence" value="ECO:0007669"/>
    <property type="project" value="UniProtKB-UniRule"/>
</dbReference>
<dbReference type="CDD" id="cd16015">
    <property type="entry name" value="LTA_synthase"/>
    <property type="match status" value="1"/>
</dbReference>
<dbReference type="FunFam" id="3.40.720.10:FF:000009">
    <property type="entry name" value="Phosphoglycerol transferase I"/>
    <property type="match status" value="1"/>
</dbReference>
<dbReference type="Gene3D" id="3.40.720.10">
    <property type="entry name" value="Alkaline Phosphatase, subunit A"/>
    <property type="match status" value="1"/>
</dbReference>
<dbReference type="HAMAP" id="MF_01070">
    <property type="entry name" value="MdoB_OpgB"/>
    <property type="match status" value="1"/>
</dbReference>
<dbReference type="InterPro" id="IPR017850">
    <property type="entry name" value="Alkaline_phosphatase_core_sf"/>
</dbReference>
<dbReference type="InterPro" id="IPR054288">
    <property type="entry name" value="DUF7024"/>
</dbReference>
<dbReference type="InterPro" id="IPR020881">
    <property type="entry name" value="OpgB"/>
</dbReference>
<dbReference type="InterPro" id="IPR050448">
    <property type="entry name" value="OpgB/LTA_synthase_biosynth"/>
</dbReference>
<dbReference type="InterPro" id="IPR000917">
    <property type="entry name" value="Sulfatase_N"/>
</dbReference>
<dbReference type="NCBIfam" id="NF003000">
    <property type="entry name" value="PRK03776.1"/>
    <property type="match status" value="1"/>
</dbReference>
<dbReference type="PANTHER" id="PTHR47371">
    <property type="entry name" value="LIPOTEICHOIC ACID SYNTHASE"/>
    <property type="match status" value="1"/>
</dbReference>
<dbReference type="PANTHER" id="PTHR47371:SF3">
    <property type="entry name" value="PHOSPHOGLYCEROL TRANSFERASE I"/>
    <property type="match status" value="1"/>
</dbReference>
<dbReference type="Pfam" id="PF22895">
    <property type="entry name" value="DUF7024"/>
    <property type="match status" value="1"/>
</dbReference>
<dbReference type="Pfam" id="PF00884">
    <property type="entry name" value="Sulfatase"/>
    <property type="match status" value="1"/>
</dbReference>
<dbReference type="SUPFAM" id="SSF53649">
    <property type="entry name" value="Alkaline phosphatase-like"/>
    <property type="match status" value="1"/>
</dbReference>
<name>OPGB_SALTI</name>